<proteinExistence type="inferred from homology"/>
<accession>B1XGW1</accession>
<evidence type="ECO:0000255" key="1">
    <source>
        <dbReference type="HAMAP-Rule" id="MF_01157"/>
    </source>
</evidence>
<reference key="1">
    <citation type="journal article" date="2008" name="J. Bacteriol.">
        <title>The complete genome sequence of Escherichia coli DH10B: insights into the biology of a laboratory workhorse.</title>
        <authorList>
            <person name="Durfee T."/>
            <person name="Nelson R."/>
            <person name="Baldwin S."/>
            <person name="Plunkett G. III"/>
            <person name="Burland V."/>
            <person name="Mau B."/>
            <person name="Petrosino J.F."/>
            <person name="Qin X."/>
            <person name="Muzny D.M."/>
            <person name="Ayele M."/>
            <person name="Gibbs R.A."/>
            <person name="Csorgo B."/>
            <person name="Posfai G."/>
            <person name="Weinstock G.M."/>
            <person name="Blattner F.R."/>
        </authorList>
    </citation>
    <scope>NUCLEOTIDE SEQUENCE [LARGE SCALE GENOMIC DNA]</scope>
    <source>
        <strain>K12 / DH10B</strain>
    </source>
</reference>
<dbReference type="EMBL" id="CP000948">
    <property type="protein sequence ID" value="ACB04228.1"/>
    <property type="molecule type" value="Genomic_DNA"/>
</dbReference>
<dbReference type="RefSeq" id="WP_001158034.1">
    <property type="nucleotide sequence ID" value="NC_010473.1"/>
</dbReference>
<dbReference type="SMR" id="B1XGW1"/>
<dbReference type="GeneID" id="93778835"/>
<dbReference type="KEGG" id="ecd:ECDH10B_3322"/>
<dbReference type="HOGENOM" id="CLU_080999_3_1_6"/>
<dbReference type="GO" id="GO:0097367">
    <property type="term" value="F:carbohydrate derivative binding"/>
    <property type="evidence" value="ECO:0007669"/>
    <property type="project" value="InterPro"/>
</dbReference>
<dbReference type="GO" id="GO:1901135">
    <property type="term" value="P:carbohydrate derivative metabolic process"/>
    <property type="evidence" value="ECO:0007669"/>
    <property type="project" value="InterPro"/>
</dbReference>
<dbReference type="GO" id="GO:0006260">
    <property type="term" value="P:DNA replication"/>
    <property type="evidence" value="ECO:0007669"/>
    <property type="project" value="UniProtKB-UniRule"/>
</dbReference>
<dbReference type="CDD" id="cd05006">
    <property type="entry name" value="SIS_GmhA"/>
    <property type="match status" value="1"/>
</dbReference>
<dbReference type="FunFam" id="3.40.50.10490:FF:000006">
    <property type="entry name" value="DnaA initiator-associating protein DiaA"/>
    <property type="match status" value="1"/>
</dbReference>
<dbReference type="Gene3D" id="3.40.50.10490">
    <property type="entry name" value="Glucose-6-phosphate isomerase like protein, domain 1"/>
    <property type="match status" value="1"/>
</dbReference>
<dbReference type="HAMAP" id="MF_01157">
    <property type="entry name" value="SIS_DiaA"/>
    <property type="match status" value="1"/>
</dbReference>
<dbReference type="InterPro" id="IPR023070">
    <property type="entry name" value="DiaA"/>
</dbReference>
<dbReference type="InterPro" id="IPR035461">
    <property type="entry name" value="GmhA/DiaA"/>
</dbReference>
<dbReference type="InterPro" id="IPR001347">
    <property type="entry name" value="SIS_dom"/>
</dbReference>
<dbReference type="InterPro" id="IPR046348">
    <property type="entry name" value="SIS_dom_sf"/>
</dbReference>
<dbReference type="InterPro" id="IPR050099">
    <property type="entry name" value="SIS_GmhA/DiaA_subfam"/>
</dbReference>
<dbReference type="NCBIfam" id="NF008138">
    <property type="entry name" value="PRK10886.1"/>
    <property type="match status" value="1"/>
</dbReference>
<dbReference type="NCBIfam" id="NF010546">
    <property type="entry name" value="PRK13936.1"/>
    <property type="match status" value="1"/>
</dbReference>
<dbReference type="PANTHER" id="PTHR30390:SF6">
    <property type="entry name" value="DNAA INITIATOR-ASSOCIATING PROTEIN DIAA"/>
    <property type="match status" value="1"/>
</dbReference>
<dbReference type="PANTHER" id="PTHR30390">
    <property type="entry name" value="SEDOHEPTULOSE 7-PHOSPHATE ISOMERASE / DNAA INITIATOR-ASSOCIATING FACTOR FOR REPLICATION INITIATION"/>
    <property type="match status" value="1"/>
</dbReference>
<dbReference type="Pfam" id="PF13580">
    <property type="entry name" value="SIS_2"/>
    <property type="match status" value="1"/>
</dbReference>
<dbReference type="SUPFAM" id="SSF53697">
    <property type="entry name" value="SIS domain"/>
    <property type="match status" value="1"/>
</dbReference>
<dbReference type="PROSITE" id="PS51464">
    <property type="entry name" value="SIS"/>
    <property type="match status" value="1"/>
</dbReference>
<feature type="chain" id="PRO_1000137788" description="DnaA initiator-associating protein DiaA">
    <location>
        <begin position="1"/>
        <end position="196"/>
    </location>
</feature>
<feature type="domain" description="SIS" evidence="1">
    <location>
        <begin position="34"/>
        <end position="196"/>
    </location>
</feature>
<comment type="function">
    <text evidence="1">Required for the timely initiation of chromosomal replication via direct interactions with the DnaA initiator protein.</text>
</comment>
<comment type="subunit">
    <text evidence="1">Homotetramer; dimer of dimers.</text>
</comment>
<comment type="similarity">
    <text evidence="1">Belongs to the SIS family. DiaA subfamily.</text>
</comment>
<keyword id="KW-0235">DNA replication</keyword>
<name>DIAA_ECODH</name>
<gene>
    <name evidence="1" type="primary">diaA</name>
    <name type="ordered locus">ECDH10B_3322</name>
</gene>
<protein>
    <recommendedName>
        <fullName evidence="1">DnaA initiator-associating protein DiaA</fullName>
    </recommendedName>
</protein>
<sequence>MQERIKACFTESIQTQIAAAEALPDAISRAAMTLVQSLLNGNKILCCGNGTSAANAQHFAASMINRFETERPSLPAIALNTDNVVLTAIANDRLHDEVYAKQVRALGHAGDVLLAISTRGNSRDIVKAVEAAVTRDMTIVALTGYDGGELAGLLGPQDVEIRIPSHRSARIQEMHMLTVNCLCDLIDNTLFPHQDD</sequence>
<organism>
    <name type="scientific">Escherichia coli (strain K12 / DH10B)</name>
    <dbReference type="NCBI Taxonomy" id="316385"/>
    <lineage>
        <taxon>Bacteria</taxon>
        <taxon>Pseudomonadati</taxon>
        <taxon>Pseudomonadota</taxon>
        <taxon>Gammaproteobacteria</taxon>
        <taxon>Enterobacterales</taxon>
        <taxon>Enterobacteriaceae</taxon>
        <taxon>Escherichia</taxon>
    </lineage>
</organism>